<accession>P0C7K0</accession>
<comment type="function">
    <text evidence="1">This peptide both inhibits the activity of the angiotensin-converting enzyme (ACE) and enhances the action of bradykinin by inhibiting the peptidases that inactivate it. It acts as an indirect hypotensive agent (By similarity).</text>
</comment>
<comment type="subcellular location">
    <subcellularLocation>
        <location evidence="2">Secreted</location>
    </subcellularLocation>
</comment>
<comment type="tissue specificity">
    <text evidence="2">Expressed by the venom gland.</text>
</comment>
<comment type="mass spectrometry"/>
<comment type="similarity">
    <text evidence="3">Belongs to the bradykinin-potentiating peptide family.</text>
</comment>
<name>BP11B_CROAD</name>
<feature type="peptide" id="PRO_0000335876" description="Bradykinin-potentiating peptide 11b">
    <location>
        <begin position="1"/>
        <end position="11"/>
    </location>
</feature>
<feature type="modified residue" description="Pyrrolidone carboxylic acid" evidence="2">
    <location>
        <position position="1"/>
    </location>
</feature>
<keyword id="KW-0903">Direct protein sequencing</keyword>
<keyword id="KW-0382">Hypotensive agent</keyword>
<keyword id="KW-0481">Metalloenzyme inhibitor</keyword>
<keyword id="KW-0483">Metalloprotease inhibitor</keyword>
<keyword id="KW-0646">Protease inhibitor</keyword>
<keyword id="KW-0873">Pyrrolidone carboxylic acid</keyword>
<keyword id="KW-0964">Secreted</keyword>
<keyword id="KW-0800">Toxin</keyword>
<dbReference type="GO" id="GO:0005576">
    <property type="term" value="C:extracellular region"/>
    <property type="evidence" value="ECO:0007669"/>
    <property type="project" value="UniProtKB-SubCell"/>
</dbReference>
<dbReference type="GO" id="GO:0030414">
    <property type="term" value="F:peptidase inhibitor activity"/>
    <property type="evidence" value="ECO:0007669"/>
    <property type="project" value="UniProtKB-KW"/>
</dbReference>
<dbReference type="GO" id="GO:0090729">
    <property type="term" value="F:toxin activity"/>
    <property type="evidence" value="ECO:0007669"/>
    <property type="project" value="UniProtKB-KW"/>
</dbReference>
<dbReference type="GO" id="GO:0008217">
    <property type="term" value="P:regulation of blood pressure"/>
    <property type="evidence" value="ECO:0007669"/>
    <property type="project" value="UniProtKB-KW"/>
</dbReference>
<protein>
    <recommendedName>
        <fullName>Bradykinin-potentiating peptide 11b</fullName>
        <shortName>BPP-11b</shortName>
    </recommendedName>
</protein>
<sequence>QGGWPRNPIPP</sequence>
<reference key="1">
    <citation type="journal article" date="2005" name="Rapid Commun. Mass Spectrom.">
        <title>Fast analysis of low molecular mass compounds present in snake venom: identification of ten new pyroglutamate-containing peptides.</title>
        <authorList>
            <person name="Wermelinger L.S."/>
            <person name="Dutra D.L."/>
            <person name="Oliveira-Carvalho A.L."/>
            <person name="Soares M.R."/>
            <person name="Bloch C. Jr."/>
            <person name="Zingali R.B."/>
        </authorList>
    </citation>
    <scope>PROTEIN SEQUENCE</scope>
    <scope>SUBCELLULAR LOCATION</scope>
    <scope>TISSUE SPECIFICITY</scope>
    <scope>MASS SPECTROMETRY</scope>
    <scope>PYROGLUTAMATE FORMATION AT GLN-1</scope>
    <source>
        <tissue>Venom</tissue>
    </source>
</reference>
<evidence type="ECO:0000250" key="1"/>
<evidence type="ECO:0000269" key="2">
    <source>
    </source>
</evidence>
<evidence type="ECO:0000305" key="3"/>
<proteinExistence type="evidence at protein level"/>
<organism>
    <name type="scientific">Crotalus adamanteus</name>
    <name type="common">Eastern diamondback rattlesnake</name>
    <dbReference type="NCBI Taxonomy" id="8729"/>
    <lineage>
        <taxon>Eukaryota</taxon>
        <taxon>Metazoa</taxon>
        <taxon>Chordata</taxon>
        <taxon>Craniata</taxon>
        <taxon>Vertebrata</taxon>
        <taxon>Euteleostomi</taxon>
        <taxon>Lepidosauria</taxon>
        <taxon>Squamata</taxon>
        <taxon>Bifurcata</taxon>
        <taxon>Unidentata</taxon>
        <taxon>Episquamata</taxon>
        <taxon>Toxicofera</taxon>
        <taxon>Serpentes</taxon>
        <taxon>Colubroidea</taxon>
        <taxon>Viperidae</taxon>
        <taxon>Crotalinae</taxon>
        <taxon>Crotalus</taxon>
    </lineage>
</organism>